<sequence>MQILLVEDDNTLFQELKKELEQWDFNVAGIEDFGKVMDTFESFNPEIVILDVQLPKYDGFYWCRKMREVSNVPILFLSSRDNPMDQVMSMELGADDYMQKPFYTNVLIAKLQAIYRRVYEFTAEEKRTLTWQDAVVDLSKDSIQKGDQTIFLSKTEMIILEILITKKNQIVSRDTIITALWDDEAFVSDNTLTVNVNRLRKKLSEISMDSAIETKVGKGYMAHE</sequence>
<feature type="chain" id="PRO_0000347908" description="Response regulator protein GraR">
    <location>
        <begin position="1"/>
        <end position="224"/>
    </location>
</feature>
<feature type="domain" description="Response regulatory" evidence="4">
    <location>
        <begin position="2"/>
        <end position="115"/>
    </location>
</feature>
<feature type="DNA-binding region" description="OmpR/PhoB-type" evidence="5">
    <location>
        <begin position="126"/>
        <end position="224"/>
    </location>
</feature>
<feature type="modified residue" description="4-aspartylphosphate" evidence="4">
    <location>
        <position position="51"/>
    </location>
</feature>
<feature type="modified residue" description="Phosphothreonine" evidence="3">
    <location>
        <position position="128"/>
    </location>
</feature>
<feature type="modified residue" description="Phosphothreonine" evidence="3">
    <location>
        <position position="130"/>
    </location>
</feature>
<feature type="modified residue" description="Phosphothreonine" evidence="3">
    <location>
        <position position="149"/>
    </location>
</feature>
<dbReference type="EMBL" id="CP000255">
    <property type="protein sequence ID" value="ABD21352.1"/>
    <property type="molecule type" value="Genomic_DNA"/>
</dbReference>
<dbReference type="RefSeq" id="WP_001166505.1">
    <property type="nucleotide sequence ID" value="NZ_CP027476.1"/>
</dbReference>
<dbReference type="SMR" id="Q2FIY0"/>
<dbReference type="KEGG" id="saa:SAUSA300_0645"/>
<dbReference type="HOGENOM" id="CLU_000445_30_3_9"/>
<dbReference type="OMA" id="QIISEVW"/>
<dbReference type="Proteomes" id="UP000001939">
    <property type="component" value="Chromosome"/>
</dbReference>
<dbReference type="GO" id="GO:0005829">
    <property type="term" value="C:cytosol"/>
    <property type="evidence" value="ECO:0007669"/>
    <property type="project" value="TreeGrafter"/>
</dbReference>
<dbReference type="GO" id="GO:0032993">
    <property type="term" value="C:protein-DNA complex"/>
    <property type="evidence" value="ECO:0007669"/>
    <property type="project" value="TreeGrafter"/>
</dbReference>
<dbReference type="GO" id="GO:0000156">
    <property type="term" value="F:phosphorelay response regulator activity"/>
    <property type="evidence" value="ECO:0007669"/>
    <property type="project" value="TreeGrafter"/>
</dbReference>
<dbReference type="GO" id="GO:0000976">
    <property type="term" value="F:transcription cis-regulatory region binding"/>
    <property type="evidence" value="ECO:0007669"/>
    <property type="project" value="TreeGrafter"/>
</dbReference>
<dbReference type="GO" id="GO:0006355">
    <property type="term" value="P:regulation of DNA-templated transcription"/>
    <property type="evidence" value="ECO:0007669"/>
    <property type="project" value="InterPro"/>
</dbReference>
<dbReference type="GO" id="GO:0046677">
    <property type="term" value="P:response to antibiotic"/>
    <property type="evidence" value="ECO:0007669"/>
    <property type="project" value="UniProtKB-KW"/>
</dbReference>
<dbReference type="CDD" id="cd18159">
    <property type="entry name" value="REC_OmpR_NsrR-like"/>
    <property type="match status" value="1"/>
</dbReference>
<dbReference type="CDD" id="cd00383">
    <property type="entry name" value="trans_reg_C"/>
    <property type="match status" value="1"/>
</dbReference>
<dbReference type="FunFam" id="3.40.50.2300:FF:000232">
    <property type="entry name" value="Response regulator GraR"/>
    <property type="match status" value="1"/>
</dbReference>
<dbReference type="FunFam" id="1.10.10.10:FF:000546">
    <property type="entry name" value="Two-component response regulator GraR"/>
    <property type="match status" value="1"/>
</dbReference>
<dbReference type="Gene3D" id="3.40.50.2300">
    <property type="match status" value="1"/>
</dbReference>
<dbReference type="Gene3D" id="1.10.10.10">
    <property type="entry name" value="Winged helix-like DNA-binding domain superfamily/Winged helix DNA-binding domain"/>
    <property type="match status" value="1"/>
</dbReference>
<dbReference type="InterPro" id="IPR011006">
    <property type="entry name" value="CheY-like_superfamily"/>
</dbReference>
<dbReference type="InterPro" id="IPR001867">
    <property type="entry name" value="OmpR/PhoB-type_DNA-bd"/>
</dbReference>
<dbReference type="InterPro" id="IPR016032">
    <property type="entry name" value="Sig_transdc_resp-reg_C-effctor"/>
</dbReference>
<dbReference type="InterPro" id="IPR001789">
    <property type="entry name" value="Sig_transdc_resp-reg_receiver"/>
</dbReference>
<dbReference type="InterPro" id="IPR039420">
    <property type="entry name" value="WalR-like"/>
</dbReference>
<dbReference type="InterPro" id="IPR036388">
    <property type="entry name" value="WH-like_DNA-bd_sf"/>
</dbReference>
<dbReference type="PANTHER" id="PTHR48111">
    <property type="entry name" value="REGULATOR OF RPOS"/>
    <property type="match status" value="1"/>
</dbReference>
<dbReference type="PANTHER" id="PTHR48111:SF27">
    <property type="entry name" value="SENSORY TRANSDUCTION PROTEIN BCER"/>
    <property type="match status" value="1"/>
</dbReference>
<dbReference type="Pfam" id="PF00072">
    <property type="entry name" value="Response_reg"/>
    <property type="match status" value="1"/>
</dbReference>
<dbReference type="Pfam" id="PF00486">
    <property type="entry name" value="Trans_reg_C"/>
    <property type="match status" value="1"/>
</dbReference>
<dbReference type="SMART" id="SM00448">
    <property type="entry name" value="REC"/>
    <property type="match status" value="1"/>
</dbReference>
<dbReference type="SMART" id="SM00862">
    <property type="entry name" value="Trans_reg_C"/>
    <property type="match status" value="1"/>
</dbReference>
<dbReference type="SUPFAM" id="SSF46894">
    <property type="entry name" value="C-terminal effector domain of the bipartite response regulators"/>
    <property type="match status" value="1"/>
</dbReference>
<dbReference type="SUPFAM" id="SSF52172">
    <property type="entry name" value="CheY-like"/>
    <property type="match status" value="1"/>
</dbReference>
<dbReference type="PROSITE" id="PS51755">
    <property type="entry name" value="OMPR_PHOB"/>
    <property type="match status" value="1"/>
</dbReference>
<dbReference type="PROSITE" id="PS50110">
    <property type="entry name" value="RESPONSE_REGULATORY"/>
    <property type="match status" value="1"/>
</dbReference>
<reference key="1">
    <citation type="journal article" date="2006" name="Lancet">
        <title>Complete genome sequence of USA300, an epidemic clone of community-acquired meticillin-resistant Staphylococcus aureus.</title>
        <authorList>
            <person name="Diep B.A."/>
            <person name="Gill S.R."/>
            <person name="Chang R.F."/>
            <person name="Phan T.H."/>
            <person name="Chen J.H."/>
            <person name="Davidson M.G."/>
            <person name="Lin F."/>
            <person name="Lin J."/>
            <person name="Carleton H.A."/>
            <person name="Mongodin E.F."/>
            <person name="Sensabaugh G.F."/>
            <person name="Perdreau-Remington F."/>
        </authorList>
    </citation>
    <scope>NUCLEOTIDE SEQUENCE [LARGE SCALE GENOMIC DNA]</scope>
    <source>
        <strain>USA300</strain>
    </source>
</reference>
<organism>
    <name type="scientific">Staphylococcus aureus (strain USA300)</name>
    <dbReference type="NCBI Taxonomy" id="367830"/>
    <lineage>
        <taxon>Bacteria</taxon>
        <taxon>Bacillati</taxon>
        <taxon>Bacillota</taxon>
        <taxon>Bacilli</taxon>
        <taxon>Bacillales</taxon>
        <taxon>Staphylococcaceae</taxon>
        <taxon>Staphylococcus</taxon>
    </lineage>
</organism>
<gene>
    <name type="primary">graR</name>
    <name type="ordered locus">SAUSA300_0645</name>
</gene>
<evidence type="ECO:0000250" key="1"/>
<evidence type="ECO:0000250" key="2">
    <source>
        <dbReference type="UniProtKB" id="Q2G0D9"/>
    </source>
</evidence>
<evidence type="ECO:0000250" key="3">
    <source>
        <dbReference type="UniProtKB" id="Q2G0E0"/>
    </source>
</evidence>
<evidence type="ECO:0000255" key="4">
    <source>
        <dbReference type="PROSITE-ProRule" id="PRU00169"/>
    </source>
</evidence>
<evidence type="ECO:0000255" key="5">
    <source>
        <dbReference type="PROSITE-ProRule" id="PRU01091"/>
    </source>
</evidence>
<keyword id="KW-0010">Activator</keyword>
<keyword id="KW-0046">Antibiotic resistance</keyword>
<keyword id="KW-0963">Cytoplasm</keyword>
<keyword id="KW-0238">DNA-binding</keyword>
<keyword id="KW-0597">Phosphoprotein</keyword>
<keyword id="KW-0678">Repressor</keyword>
<keyword id="KW-0804">Transcription</keyword>
<keyword id="KW-0805">Transcription regulation</keyword>
<keyword id="KW-0902">Two-component regulatory system</keyword>
<keyword id="KW-0843">Virulence</keyword>
<proteinExistence type="inferred from homology"/>
<comment type="function">
    <text evidence="3">Member of the two-component regulatory system GraR/GraS involved in resistance against cationic antimicrobial peptides (CAMPs). Upon phosphorylation by GraS, functions as a transcription regulator by direct binding to promoter regions of target genes such as adhesins, exoproteins, transporters, toxins, and proteins involved in cell wall synthesis. Down-regulates the expression of many genes involved in RNA and amino acid synthesis or glycolysis.</text>
</comment>
<comment type="subunit">
    <text evidence="2">Interacts with GraX.</text>
</comment>
<comment type="subcellular location">
    <subcellularLocation>
        <location evidence="1">Cytoplasm</location>
    </subcellularLocation>
</comment>
<comment type="PTM">
    <text evidence="3">Phosphorylated by GraS. Phosphorylated by Stk1; phosphorylation increases the DNA-binding activity of GraR.</text>
</comment>
<name>GRAR_STAA3</name>
<accession>Q2FIY0</accession>
<protein>
    <recommendedName>
        <fullName>Response regulator protein GraR</fullName>
    </recommendedName>
    <alternativeName>
        <fullName>Glycopeptide resistance-associated protein R</fullName>
    </alternativeName>
</protein>